<gene>
    <name type="primary">MED24</name>
    <name type="synonym">ARC100</name>
    <name type="synonym">CRSP4</name>
    <name type="synonym">DRIP100</name>
    <name type="synonym">KIAA0130</name>
    <name type="synonym">THRAP4</name>
    <name type="synonym">TRAP100</name>
</gene>
<keyword id="KW-0002">3D-structure</keyword>
<keyword id="KW-0010">Activator</keyword>
<keyword id="KW-0025">Alternative splicing</keyword>
<keyword id="KW-0903">Direct protein sequencing</keyword>
<keyword id="KW-0539">Nucleus</keyword>
<keyword id="KW-0597">Phosphoprotein</keyword>
<keyword id="KW-1267">Proteomics identification</keyword>
<keyword id="KW-1185">Reference proteome</keyword>
<keyword id="KW-0677">Repeat</keyword>
<keyword id="KW-0804">Transcription</keyword>
<keyword id="KW-0805">Transcription regulation</keyword>
<evidence type="ECO:0000269" key="1">
    <source>
    </source>
</evidence>
<evidence type="ECO:0000269" key="2">
    <source>
    </source>
</evidence>
<evidence type="ECO:0000269" key="3">
    <source>
    </source>
</evidence>
<evidence type="ECO:0000269" key="4">
    <source>
    </source>
</evidence>
<evidence type="ECO:0000269" key="5">
    <source>
    </source>
</evidence>
<evidence type="ECO:0000269" key="6">
    <source>
    </source>
</evidence>
<evidence type="ECO:0000269" key="7">
    <source>
    </source>
</evidence>
<evidence type="ECO:0000269" key="8">
    <source>
    </source>
</evidence>
<evidence type="ECO:0000269" key="9">
    <source>
    </source>
</evidence>
<evidence type="ECO:0000269" key="10">
    <source>
    </source>
</evidence>
<evidence type="ECO:0000303" key="11">
    <source>
    </source>
</evidence>
<evidence type="ECO:0000305" key="12"/>
<evidence type="ECO:0007744" key="13">
    <source>
    </source>
</evidence>
<evidence type="ECO:0007744" key="14">
    <source>
    </source>
</evidence>
<evidence type="ECO:0007744" key="15">
    <source>
    </source>
</evidence>
<evidence type="ECO:0007744" key="16">
    <source>
    </source>
</evidence>
<evidence type="ECO:0007744" key="17">
    <source>
    </source>
</evidence>
<evidence type="ECO:0007829" key="18">
    <source>
        <dbReference type="PDB" id="7EMF"/>
    </source>
</evidence>
<comment type="function">
    <text evidence="4 7">Component of the Mediator complex, a coactivator involved in the regulated transcription of nearly all RNA polymerase II-dependent genes. Mediator functions as a bridge to convey information from gene-specific regulatory proteins to the basal RNA polymerase II transcription machinery. Mediator is recruited to promoters by direct interactions with regulatory proteins and serves as a scaffold for the assembly of a functional preinitiation complex with RNA polymerase II and the general transcription factors.</text>
</comment>
<comment type="subunit">
    <text evidence="1 2 3 4 5 6 7 9">Component of the Mediator complex, which is composed of MED1, MED4, MED6, MED7, MED8, MED9, MED10, MED11, MED12, MED13, MED13L, MED14, MED15, MED16, MED17, MED18, MED19, MED20, MED21, MED22, MED23, MED24, MED25, MED26, MED27, MED29, MED30, MED31, CCNC, CDK8 and CDC2L6/CDK11. The MED12, MED13, CCNC and CDK8 subunits form a distinct module termed the CDK8 module. Mediator containing the CDK8 module is less active than Mediator lacking this module in supporting transcriptional activation. Individual preparations of the Mediator complex lacking one or more distinct subunits have been variously termed ARC, CRSP, DRIP, PC2, SMCC and TRAP. Interacts with AR.</text>
</comment>
<comment type="interaction">
    <interactant intactId="EBI-394523">
        <id>O75448</id>
    </interactant>
    <interactant intactId="EBI-394489">
        <id>O60244</id>
        <label>MED14</label>
    </interactant>
    <organismsDiffer>false</organismsDiffer>
    <experiments>4</experiments>
</comment>
<comment type="interaction">
    <interactant intactId="EBI-394523">
        <id>O75448</id>
    </interactant>
    <interactant intactId="EBI-394541">
        <id>Q9Y2X0</id>
        <label>MED16</label>
    </interactant>
    <organismsDiffer>false</organismsDiffer>
    <experiments>4</experiments>
</comment>
<comment type="interaction">
    <interactant intactId="EBI-394523">
        <id>O75448</id>
    </interactant>
    <interactant intactId="EBI-394558">
        <id>Q71SY5</id>
        <label>MED25</label>
    </interactant>
    <organismsDiffer>false</organismsDiffer>
    <experiments>5</experiments>
</comment>
<comment type="subcellular location">
    <subcellularLocation>
        <location evidence="12">Nucleus</location>
    </subcellularLocation>
</comment>
<comment type="alternative products">
    <event type="alternative splicing"/>
    <isoform>
        <id>O75448-1</id>
        <name>1</name>
        <sequence type="displayed"/>
    </isoform>
    <isoform>
        <id>O75448-2</id>
        <name>2</name>
        <sequence type="described" ref="VSP_041125"/>
    </isoform>
</comment>
<comment type="tissue specificity">
    <text evidence="10">Ubiquitous. Abundant in skeletal muscle, heart and placenta.</text>
</comment>
<comment type="similarity">
    <text evidence="12">Belongs to the Mediator complex subunit 24 family.</text>
</comment>
<comment type="sequence caution" evidence="12">
    <conflict type="erroneous initiation">
        <sequence resource="EMBL-CDS" id="BAA09479"/>
    </conflict>
</comment>
<organism>
    <name type="scientific">Homo sapiens</name>
    <name type="common">Human</name>
    <dbReference type="NCBI Taxonomy" id="9606"/>
    <lineage>
        <taxon>Eukaryota</taxon>
        <taxon>Metazoa</taxon>
        <taxon>Chordata</taxon>
        <taxon>Craniata</taxon>
        <taxon>Vertebrata</taxon>
        <taxon>Euteleostomi</taxon>
        <taxon>Mammalia</taxon>
        <taxon>Eutheria</taxon>
        <taxon>Euarchontoglires</taxon>
        <taxon>Primates</taxon>
        <taxon>Haplorrhini</taxon>
        <taxon>Catarrhini</taxon>
        <taxon>Hominidae</taxon>
        <taxon>Homo</taxon>
    </lineage>
</organism>
<dbReference type="EMBL" id="AF055995">
    <property type="protein sequence ID" value="AAC39855.1"/>
    <property type="molecule type" value="mRNA"/>
</dbReference>
<dbReference type="EMBL" id="AF277379">
    <property type="protein sequence ID" value="AAF78764.1"/>
    <property type="molecule type" value="mRNA"/>
</dbReference>
<dbReference type="EMBL" id="D50920">
    <property type="protein sequence ID" value="BAA09479.2"/>
    <property type="status" value="ALT_INIT"/>
    <property type="molecule type" value="mRNA"/>
</dbReference>
<dbReference type="EMBL" id="AK022508">
    <property type="protein sequence ID" value="BAG51081.1"/>
    <property type="molecule type" value="mRNA"/>
</dbReference>
<dbReference type="EMBL" id="AK291040">
    <property type="protein sequence ID" value="BAF83729.1"/>
    <property type="molecule type" value="mRNA"/>
</dbReference>
<dbReference type="EMBL" id="AC090844">
    <property type="status" value="NOT_ANNOTATED_CDS"/>
    <property type="molecule type" value="Genomic_DNA"/>
</dbReference>
<dbReference type="EMBL" id="AC102799">
    <property type="status" value="NOT_ANNOTATED_CDS"/>
    <property type="molecule type" value="Genomic_DNA"/>
</dbReference>
<dbReference type="EMBL" id="BC011375">
    <property type="protein sequence ID" value="AAH11375.1"/>
    <property type="molecule type" value="mRNA"/>
</dbReference>
<dbReference type="CCDS" id="CCDS11359.1">
    <molecule id="O75448-1"/>
</dbReference>
<dbReference type="CCDS" id="CCDS42315.1">
    <molecule id="O75448-2"/>
</dbReference>
<dbReference type="RefSeq" id="NP_001072986.1">
    <molecule id="O75448-2"/>
    <property type="nucleotide sequence ID" value="NM_001079518.2"/>
</dbReference>
<dbReference type="RefSeq" id="NP_001254726.1">
    <molecule id="O75448-2"/>
    <property type="nucleotide sequence ID" value="NM_001267797.2"/>
</dbReference>
<dbReference type="RefSeq" id="NP_055630.2">
    <molecule id="O75448-1"/>
    <property type="nucleotide sequence ID" value="NM_014815.3"/>
</dbReference>
<dbReference type="RefSeq" id="XP_016880955.1">
    <property type="nucleotide sequence ID" value="XM_017025466.1"/>
</dbReference>
<dbReference type="PDB" id="7EMF">
    <property type="method" value="EM"/>
    <property type="resolution" value="3.50 A"/>
    <property type="chains" value="X=1-989"/>
</dbReference>
<dbReference type="PDB" id="7ENA">
    <property type="method" value="EM"/>
    <property type="resolution" value="4.07 A"/>
    <property type="chains" value="x=1-989"/>
</dbReference>
<dbReference type="PDB" id="7ENC">
    <property type="method" value="EM"/>
    <property type="resolution" value="4.13 A"/>
    <property type="chains" value="x=1-989"/>
</dbReference>
<dbReference type="PDB" id="7ENJ">
    <property type="method" value="EM"/>
    <property type="resolution" value="4.40 A"/>
    <property type="chains" value="X=1-989"/>
</dbReference>
<dbReference type="PDB" id="7LBM">
    <property type="method" value="EM"/>
    <property type="resolution" value="4.80 A"/>
    <property type="chains" value="2=1-989"/>
</dbReference>
<dbReference type="PDB" id="8GXQ">
    <property type="method" value="EM"/>
    <property type="resolution" value="5.04 A"/>
    <property type="chains" value="x=1-989"/>
</dbReference>
<dbReference type="PDB" id="8GXS">
    <property type="method" value="EM"/>
    <property type="resolution" value="4.16 A"/>
    <property type="chains" value="x=1-989"/>
</dbReference>
<dbReference type="PDB" id="8T9D">
    <property type="method" value="EM"/>
    <property type="resolution" value="4.66 A"/>
    <property type="chains" value="S=1-989"/>
</dbReference>
<dbReference type="PDB" id="8TQW">
    <property type="method" value="EM"/>
    <property type="resolution" value="8.20 A"/>
    <property type="chains" value="X=1-989"/>
</dbReference>
<dbReference type="PDB" id="8TRH">
    <property type="method" value="EM"/>
    <property type="resolution" value="3.70 A"/>
    <property type="chains" value="X=1-989"/>
</dbReference>
<dbReference type="PDBsum" id="7EMF"/>
<dbReference type="PDBsum" id="7ENA"/>
<dbReference type="PDBsum" id="7ENC"/>
<dbReference type="PDBsum" id="7ENJ"/>
<dbReference type="PDBsum" id="7LBM"/>
<dbReference type="PDBsum" id="8GXQ"/>
<dbReference type="PDBsum" id="8GXS"/>
<dbReference type="PDBsum" id="8T9D"/>
<dbReference type="PDBsum" id="8TQW"/>
<dbReference type="PDBsum" id="8TRH"/>
<dbReference type="EMDB" id="EMD-23255"/>
<dbReference type="EMDB" id="EMD-31191"/>
<dbReference type="EMDB" id="EMD-31204"/>
<dbReference type="EMDB" id="EMD-31207"/>
<dbReference type="EMDB" id="EMD-31211"/>
<dbReference type="EMDB" id="EMD-34359"/>
<dbReference type="EMDB" id="EMD-34360"/>
<dbReference type="EMDB" id="EMD-41107"/>
<dbReference type="EMDB" id="EMD-41565"/>
<dbReference type="EMDB" id="EMD-41580"/>
<dbReference type="SMR" id="O75448"/>
<dbReference type="BioGRID" id="115196">
    <property type="interactions" value="136"/>
</dbReference>
<dbReference type="ComplexPortal" id="CPX-3227">
    <property type="entry name" value="Core mediator complex"/>
</dbReference>
<dbReference type="CORUM" id="O75448"/>
<dbReference type="DIP" id="DIP-31462N"/>
<dbReference type="FunCoup" id="O75448">
    <property type="interactions" value="2886"/>
</dbReference>
<dbReference type="IntAct" id="O75448">
    <property type="interactions" value="78"/>
</dbReference>
<dbReference type="MINT" id="O75448"/>
<dbReference type="STRING" id="9606.ENSP00000440100"/>
<dbReference type="GlyGen" id="O75448">
    <property type="glycosylation" value="1 site, 1 O-linked glycan (1 site)"/>
</dbReference>
<dbReference type="iPTMnet" id="O75448"/>
<dbReference type="PhosphoSitePlus" id="O75448"/>
<dbReference type="BioMuta" id="MED24"/>
<dbReference type="CPTAC" id="CPTAC-933"/>
<dbReference type="jPOST" id="O75448"/>
<dbReference type="MassIVE" id="O75448"/>
<dbReference type="PaxDb" id="9606-ENSP00000377686"/>
<dbReference type="PeptideAtlas" id="O75448"/>
<dbReference type="ProteomicsDB" id="50015">
    <molecule id="O75448-1"/>
</dbReference>
<dbReference type="ProteomicsDB" id="50016">
    <molecule id="O75448-2"/>
</dbReference>
<dbReference type="Pumba" id="O75448"/>
<dbReference type="Antibodypedia" id="28479">
    <property type="antibodies" value="144 antibodies from 24 providers"/>
</dbReference>
<dbReference type="DNASU" id="9862"/>
<dbReference type="Ensembl" id="ENST00000356271.7">
    <molecule id="O75448-2"/>
    <property type="protein sequence ID" value="ENSP00000348610.3"/>
    <property type="gene ID" value="ENSG00000008838.21"/>
</dbReference>
<dbReference type="Ensembl" id="ENST00000394127.6">
    <molecule id="O75448-2"/>
    <property type="protein sequence ID" value="ENSP00000377685.2"/>
    <property type="gene ID" value="ENSG00000008838.21"/>
</dbReference>
<dbReference type="Ensembl" id="ENST00000394128.7">
    <molecule id="O75448-1"/>
    <property type="protein sequence ID" value="ENSP00000377686.2"/>
    <property type="gene ID" value="ENSG00000008838.21"/>
</dbReference>
<dbReference type="GeneID" id="9862"/>
<dbReference type="KEGG" id="hsa:9862"/>
<dbReference type="MANE-Select" id="ENST00000394128.7">
    <property type="protein sequence ID" value="ENSP00000377686.2"/>
    <property type="RefSeq nucleotide sequence ID" value="NM_014815.4"/>
    <property type="RefSeq protein sequence ID" value="NP_055630.2"/>
</dbReference>
<dbReference type="UCSC" id="uc002htt.4">
    <molecule id="O75448-1"/>
    <property type="organism name" value="human"/>
</dbReference>
<dbReference type="AGR" id="HGNC:22963"/>
<dbReference type="CTD" id="9862"/>
<dbReference type="DisGeNET" id="9862"/>
<dbReference type="GeneCards" id="MED24"/>
<dbReference type="HGNC" id="HGNC:22963">
    <property type="gene designation" value="MED24"/>
</dbReference>
<dbReference type="HPA" id="ENSG00000008838">
    <property type="expression patterns" value="Low tissue specificity"/>
</dbReference>
<dbReference type="MIM" id="607000">
    <property type="type" value="gene"/>
</dbReference>
<dbReference type="neXtProt" id="NX_O75448"/>
<dbReference type="OpenTargets" id="ENSG00000008838"/>
<dbReference type="PharmGKB" id="PA162395566"/>
<dbReference type="VEuPathDB" id="HostDB:ENSG00000008838"/>
<dbReference type="eggNOG" id="ENOG502QPJD">
    <property type="taxonomic scope" value="Eukaryota"/>
</dbReference>
<dbReference type="GeneTree" id="ENSGT00390000016438"/>
<dbReference type="HOGENOM" id="CLU_007484_0_0_1"/>
<dbReference type="InParanoid" id="O75448"/>
<dbReference type="OMA" id="RWSDSQW"/>
<dbReference type="OrthoDB" id="21216at2759"/>
<dbReference type="PAN-GO" id="O75448">
    <property type="GO annotations" value="2 GO annotations based on evolutionary models"/>
</dbReference>
<dbReference type="PhylomeDB" id="O75448"/>
<dbReference type="TreeFam" id="TF323565"/>
<dbReference type="PathwayCommons" id="O75448"/>
<dbReference type="Reactome" id="R-HSA-1989781">
    <property type="pathway name" value="PPARA activates gene expression"/>
</dbReference>
<dbReference type="Reactome" id="R-HSA-212436">
    <property type="pathway name" value="Generic Transcription Pathway"/>
</dbReference>
<dbReference type="Reactome" id="R-HSA-381340">
    <property type="pathway name" value="Transcriptional regulation of white adipocyte differentiation"/>
</dbReference>
<dbReference type="Reactome" id="R-HSA-9833110">
    <property type="pathway name" value="RSV-host interactions"/>
</dbReference>
<dbReference type="Reactome" id="R-HSA-9841922">
    <property type="pathway name" value="MLL4 and MLL3 complexes regulate expression of PPARG target genes in adipogenesis and hepatic steatosis"/>
</dbReference>
<dbReference type="SignaLink" id="O75448"/>
<dbReference type="SIGNOR" id="O75448"/>
<dbReference type="BioGRID-ORCS" id="9862">
    <property type="hits" value="261 hits in 1192 CRISPR screens"/>
</dbReference>
<dbReference type="ChiTaRS" id="MED24">
    <property type="organism name" value="human"/>
</dbReference>
<dbReference type="GeneWiki" id="MED24"/>
<dbReference type="GenomeRNAi" id="9862"/>
<dbReference type="Pharos" id="O75448">
    <property type="development level" value="Tbio"/>
</dbReference>
<dbReference type="PRO" id="PR:O75448"/>
<dbReference type="Proteomes" id="UP000005640">
    <property type="component" value="Chromosome 17"/>
</dbReference>
<dbReference type="RNAct" id="O75448">
    <property type="molecule type" value="protein"/>
</dbReference>
<dbReference type="Bgee" id="ENSG00000008838">
    <property type="expression patterns" value="Expressed in right hemisphere of cerebellum and 181 other cell types or tissues"/>
</dbReference>
<dbReference type="ExpressionAtlas" id="O75448">
    <property type="expression patterns" value="baseline and differential"/>
</dbReference>
<dbReference type="GO" id="GO:0070847">
    <property type="term" value="C:core mediator complex"/>
    <property type="evidence" value="ECO:0000353"/>
    <property type="project" value="ComplexPortal"/>
</dbReference>
<dbReference type="GO" id="GO:0016592">
    <property type="term" value="C:mediator complex"/>
    <property type="evidence" value="ECO:0000318"/>
    <property type="project" value="GO_Central"/>
</dbReference>
<dbReference type="GO" id="GO:0005654">
    <property type="term" value="C:nucleoplasm"/>
    <property type="evidence" value="ECO:0000304"/>
    <property type="project" value="Reactome"/>
</dbReference>
<dbReference type="GO" id="GO:0005634">
    <property type="term" value="C:nucleus"/>
    <property type="evidence" value="ECO:0000314"/>
    <property type="project" value="UniProtKB"/>
</dbReference>
<dbReference type="GO" id="GO:0046966">
    <property type="term" value="F:nuclear thyroid hormone receptor binding"/>
    <property type="evidence" value="ECO:0000314"/>
    <property type="project" value="UniProtKB"/>
</dbReference>
<dbReference type="GO" id="GO:0042809">
    <property type="term" value="F:nuclear vitamin D receptor binding"/>
    <property type="evidence" value="ECO:0000303"/>
    <property type="project" value="UniProtKB"/>
</dbReference>
<dbReference type="GO" id="GO:0003713">
    <property type="term" value="F:transcription coactivator activity"/>
    <property type="evidence" value="ECO:0000314"/>
    <property type="project" value="UniProtKB"/>
</dbReference>
<dbReference type="GO" id="GO:0003712">
    <property type="term" value="F:transcription coregulator activity"/>
    <property type="evidence" value="ECO:0000314"/>
    <property type="project" value="UniProtKB"/>
</dbReference>
<dbReference type="GO" id="GO:0045893">
    <property type="term" value="P:positive regulation of DNA-templated transcription"/>
    <property type="evidence" value="ECO:0000314"/>
    <property type="project" value="UniProtKB"/>
</dbReference>
<dbReference type="GO" id="GO:0032968">
    <property type="term" value="P:positive regulation of transcription elongation by RNA polymerase II"/>
    <property type="evidence" value="ECO:0000303"/>
    <property type="project" value="ComplexPortal"/>
</dbReference>
<dbReference type="GO" id="GO:0060261">
    <property type="term" value="P:positive regulation of transcription initiation by RNA polymerase II"/>
    <property type="evidence" value="ECO:0000314"/>
    <property type="project" value="UniProtKB"/>
</dbReference>
<dbReference type="GO" id="GO:0051123">
    <property type="term" value="P:RNA polymerase II preinitiation complex assembly"/>
    <property type="evidence" value="ECO:0000303"/>
    <property type="project" value="ComplexPortal"/>
</dbReference>
<dbReference type="GO" id="GO:0035019">
    <property type="term" value="P:somatic stem cell population maintenance"/>
    <property type="evidence" value="ECO:0007669"/>
    <property type="project" value="Ensembl"/>
</dbReference>
<dbReference type="InterPro" id="IPR021429">
    <property type="entry name" value="Mediator_Med24"/>
</dbReference>
<dbReference type="PANTHER" id="PTHR12898">
    <property type="entry name" value="MEDIATOR OF RNA POLYMERASE II TRANSCRIPTION SUBUNIT 24"/>
    <property type="match status" value="1"/>
</dbReference>
<dbReference type="PANTHER" id="PTHR12898:SF1">
    <property type="entry name" value="MEDIATOR OF RNA POLYMERASE II TRANSCRIPTION SUBUNIT 24"/>
    <property type="match status" value="1"/>
</dbReference>
<dbReference type="Pfam" id="PF11277">
    <property type="entry name" value="Med24_N"/>
    <property type="match status" value="1"/>
</dbReference>
<reference key="1">
    <citation type="journal article" date="1998" name="Proc. Natl. Acad. Sci. U.S.A.">
        <title>The TRAP220 component of a thyroid hormone receptor-associated protein (TRAP) coactivator complex interacts directly with nuclear receptors in a ligand-dependent fashion.</title>
        <authorList>
            <person name="Yuan C.-X."/>
            <person name="Ito M."/>
            <person name="Fondell J.D."/>
            <person name="Fu Z.-Y."/>
            <person name="Roeder R.G."/>
        </authorList>
    </citation>
    <scope>NUCLEOTIDE SEQUENCE [MRNA] (ISOFORM 1)</scope>
    <scope>PROTEIN SEQUENCE OF 1-15</scope>
    <scope>TISSUE SPECIFICITY</scope>
</reference>
<reference key="2">
    <citation type="journal article" date="1998" name="Genes Dev.">
        <title>A novel protein complex that interacts with the vitamin D3 receptor in a ligand-dependent manner and enhances VDR transactivation in a cell-free system.</title>
        <authorList>
            <person name="Rachez C."/>
            <person name="Suldan Z."/>
            <person name="Ward J."/>
            <person name="Chang C.-P.B."/>
            <person name="Burakov D."/>
            <person name="Erdjument-Bromage H."/>
            <person name="Tempst P."/>
            <person name="Freedman L.P."/>
        </authorList>
    </citation>
    <scope>NUCLEOTIDE SEQUENCE [MRNA] (ISOFORM 1)</scope>
    <scope>IDENTIFICATION IN DRIP COMPLEX</scope>
</reference>
<reference key="3">
    <citation type="journal article" date="1995" name="DNA Res.">
        <title>Prediction of the coding sequences of unidentified human genes. IV. The coding sequences of 40 new genes (KIAA0121-KIAA0160) deduced by analysis of cDNA clones from human cell line KG-1.</title>
        <authorList>
            <person name="Nagase T."/>
            <person name="Seki N."/>
            <person name="Tanaka A."/>
            <person name="Ishikawa K."/>
            <person name="Nomura N."/>
        </authorList>
    </citation>
    <scope>NUCLEOTIDE SEQUENCE [LARGE SCALE MRNA] (ISOFORM 1)</scope>
    <scope>VARIANT THR-204</scope>
    <source>
        <tissue>Bone marrow</tissue>
    </source>
</reference>
<reference key="4">
    <citation type="journal article" date="2004" name="Nat. Genet.">
        <title>Complete sequencing and characterization of 21,243 full-length human cDNAs.</title>
        <authorList>
            <person name="Ota T."/>
            <person name="Suzuki Y."/>
            <person name="Nishikawa T."/>
            <person name="Otsuki T."/>
            <person name="Sugiyama T."/>
            <person name="Irie R."/>
            <person name="Wakamatsu A."/>
            <person name="Hayashi K."/>
            <person name="Sato H."/>
            <person name="Nagai K."/>
            <person name="Kimura K."/>
            <person name="Makita H."/>
            <person name="Sekine M."/>
            <person name="Obayashi M."/>
            <person name="Nishi T."/>
            <person name="Shibahara T."/>
            <person name="Tanaka T."/>
            <person name="Ishii S."/>
            <person name="Yamamoto J."/>
            <person name="Saito K."/>
            <person name="Kawai Y."/>
            <person name="Isono Y."/>
            <person name="Nakamura Y."/>
            <person name="Nagahari K."/>
            <person name="Murakami K."/>
            <person name="Yasuda T."/>
            <person name="Iwayanagi T."/>
            <person name="Wagatsuma M."/>
            <person name="Shiratori A."/>
            <person name="Sudo H."/>
            <person name="Hosoiri T."/>
            <person name="Kaku Y."/>
            <person name="Kodaira H."/>
            <person name="Kondo H."/>
            <person name="Sugawara M."/>
            <person name="Takahashi M."/>
            <person name="Kanda K."/>
            <person name="Yokoi T."/>
            <person name="Furuya T."/>
            <person name="Kikkawa E."/>
            <person name="Omura Y."/>
            <person name="Abe K."/>
            <person name="Kamihara K."/>
            <person name="Katsuta N."/>
            <person name="Sato K."/>
            <person name="Tanikawa M."/>
            <person name="Yamazaki M."/>
            <person name="Ninomiya K."/>
            <person name="Ishibashi T."/>
            <person name="Yamashita H."/>
            <person name="Murakawa K."/>
            <person name="Fujimori K."/>
            <person name="Tanai H."/>
            <person name="Kimata M."/>
            <person name="Watanabe M."/>
            <person name="Hiraoka S."/>
            <person name="Chiba Y."/>
            <person name="Ishida S."/>
            <person name="Ono Y."/>
            <person name="Takiguchi S."/>
            <person name="Watanabe S."/>
            <person name="Yosida M."/>
            <person name="Hotuta T."/>
            <person name="Kusano J."/>
            <person name="Kanehori K."/>
            <person name="Takahashi-Fujii A."/>
            <person name="Hara H."/>
            <person name="Tanase T.-O."/>
            <person name="Nomura Y."/>
            <person name="Togiya S."/>
            <person name="Komai F."/>
            <person name="Hara R."/>
            <person name="Takeuchi K."/>
            <person name="Arita M."/>
            <person name="Imose N."/>
            <person name="Musashino K."/>
            <person name="Yuuki H."/>
            <person name="Oshima A."/>
            <person name="Sasaki N."/>
            <person name="Aotsuka S."/>
            <person name="Yoshikawa Y."/>
            <person name="Matsunawa H."/>
            <person name="Ichihara T."/>
            <person name="Shiohata N."/>
            <person name="Sano S."/>
            <person name="Moriya S."/>
            <person name="Momiyama H."/>
            <person name="Satoh N."/>
            <person name="Takami S."/>
            <person name="Terashima Y."/>
            <person name="Suzuki O."/>
            <person name="Nakagawa S."/>
            <person name="Senoh A."/>
            <person name="Mizoguchi H."/>
            <person name="Goto Y."/>
            <person name="Shimizu F."/>
            <person name="Wakebe H."/>
            <person name="Hishigaki H."/>
            <person name="Watanabe T."/>
            <person name="Sugiyama A."/>
            <person name="Takemoto M."/>
            <person name="Kawakami B."/>
            <person name="Yamazaki M."/>
            <person name="Watanabe K."/>
            <person name="Kumagai A."/>
            <person name="Itakura S."/>
            <person name="Fukuzumi Y."/>
            <person name="Fujimori Y."/>
            <person name="Komiyama M."/>
            <person name="Tashiro H."/>
            <person name="Tanigami A."/>
            <person name="Fujiwara T."/>
            <person name="Ono T."/>
            <person name="Yamada K."/>
            <person name="Fujii Y."/>
            <person name="Ozaki K."/>
            <person name="Hirao M."/>
            <person name="Ohmori Y."/>
            <person name="Kawabata A."/>
            <person name="Hikiji T."/>
            <person name="Kobatake N."/>
            <person name="Inagaki H."/>
            <person name="Ikema Y."/>
            <person name="Okamoto S."/>
            <person name="Okitani R."/>
            <person name="Kawakami T."/>
            <person name="Noguchi S."/>
            <person name="Itoh T."/>
            <person name="Shigeta K."/>
            <person name="Senba T."/>
            <person name="Matsumura K."/>
            <person name="Nakajima Y."/>
            <person name="Mizuno T."/>
            <person name="Morinaga M."/>
            <person name="Sasaki M."/>
            <person name="Togashi T."/>
            <person name="Oyama M."/>
            <person name="Hata H."/>
            <person name="Watanabe M."/>
            <person name="Komatsu T."/>
            <person name="Mizushima-Sugano J."/>
            <person name="Satoh T."/>
            <person name="Shirai Y."/>
            <person name="Takahashi Y."/>
            <person name="Nakagawa K."/>
            <person name="Okumura K."/>
            <person name="Nagase T."/>
            <person name="Nomura N."/>
            <person name="Kikuchi H."/>
            <person name="Masuho Y."/>
            <person name="Yamashita R."/>
            <person name="Nakai K."/>
            <person name="Yada T."/>
            <person name="Nakamura Y."/>
            <person name="Ohara O."/>
            <person name="Isogai T."/>
            <person name="Sugano S."/>
        </authorList>
    </citation>
    <scope>NUCLEOTIDE SEQUENCE [LARGE SCALE MRNA] (ISOFORM 2)</scope>
    <source>
        <tissue>Teratocarcinoma</tissue>
    </source>
</reference>
<reference key="5">
    <citation type="journal article" date="2006" name="Nature">
        <title>DNA sequence of human chromosome 17 and analysis of rearrangement in the human lineage.</title>
        <authorList>
            <person name="Zody M.C."/>
            <person name="Garber M."/>
            <person name="Adams D.J."/>
            <person name="Sharpe T."/>
            <person name="Harrow J."/>
            <person name="Lupski J.R."/>
            <person name="Nicholson C."/>
            <person name="Searle S.M."/>
            <person name="Wilming L."/>
            <person name="Young S.K."/>
            <person name="Abouelleil A."/>
            <person name="Allen N.R."/>
            <person name="Bi W."/>
            <person name="Bloom T."/>
            <person name="Borowsky M.L."/>
            <person name="Bugalter B.E."/>
            <person name="Butler J."/>
            <person name="Chang J.L."/>
            <person name="Chen C.-K."/>
            <person name="Cook A."/>
            <person name="Corum B."/>
            <person name="Cuomo C.A."/>
            <person name="de Jong P.J."/>
            <person name="DeCaprio D."/>
            <person name="Dewar K."/>
            <person name="FitzGerald M."/>
            <person name="Gilbert J."/>
            <person name="Gibson R."/>
            <person name="Gnerre S."/>
            <person name="Goldstein S."/>
            <person name="Grafham D.V."/>
            <person name="Grocock R."/>
            <person name="Hafez N."/>
            <person name="Hagopian D.S."/>
            <person name="Hart E."/>
            <person name="Norman C.H."/>
            <person name="Humphray S."/>
            <person name="Jaffe D.B."/>
            <person name="Jones M."/>
            <person name="Kamal M."/>
            <person name="Khodiyar V.K."/>
            <person name="LaButti K."/>
            <person name="Laird G."/>
            <person name="Lehoczky J."/>
            <person name="Liu X."/>
            <person name="Lokyitsang T."/>
            <person name="Loveland J."/>
            <person name="Lui A."/>
            <person name="Macdonald P."/>
            <person name="Major J.E."/>
            <person name="Matthews L."/>
            <person name="Mauceli E."/>
            <person name="McCarroll S.A."/>
            <person name="Mihalev A.H."/>
            <person name="Mudge J."/>
            <person name="Nguyen C."/>
            <person name="Nicol R."/>
            <person name="O'Leary S.B."/>
            <person name="Osoegawa K."/>
            <person name="Schwartz D.C."/>
            <person name="Shaw-Smith C."/>
            <person name="Stankiewicz P."/>
            <person name="Steward C."/>
            <person name="Swarbreck D."/>
            <person name="Venkataraman V."/>
            <person name="Whittaker C.A."/>
            <person name="Yang X."/>
            <person name="Zimmer A.R."/>
            <person name="Bradley A."/>
            <person name="Hubbard T."/>
            <person name="Birren B.W."/>
            <person name="Rogers J."/>
            <person name="Lander E.S."/>
            <person name="Nusbaum C."/>
        </authorList>
    </citation>
    <scope>NUCLEOTIDE SEQUENCE [LARGE SCALE GENOMIC DNA]</scope>
</reference>
<reference key="6">
    <citation type="journal article" date="2004" name="Genome Res.">
        <title>The status, quality, and expansion of the NIH full-length cDNA project: the Mammalian Gene Collection (MGC).</title>
        <authorList>
            <consortium name="The MGC Project Team"/>
        </authorList>
    </citation>
    <scope>NUCLEOTIDE SEQUENCE [LARGE SCALE MRNA] (ISOFORM 1)</scope>
    <source>
        <tissue>Eye</tissue>
    </source>
</reference>
<reference key="7">
    <citation type="journal article" date="1999" name="Nature">
        <title>Composite co-activator ARC mediates chromatin-directed transcriptional activation.</title>
        <authorList>
            <person name="Naeaer A.M."/>
            <person name="Beaurang P.A."/>
            <person name="Zhou S."/>
            <person name="Abraham S."/>
            <person name="Solomon W.B."/>
            <person name="Tjian R."/>
        </authorList>
    </citation>
    <scope>PROTEIN SEQUENCE OF 1-11 AND 957-965</scope>
    <scope>IDENTIFICATION IN ARC COMPLEX</scope>
</reference>
<reference key="8">
    <citation type="journal article" date="1999" name="Nature">
        <title>Ligand-dependent transcription activation by nuclear receptors requires the DRIP complex.</title>
        <authorList>
            <person name="Rachez C."/>
            <person name="Lemon B.D."/>
            <person name="Suldan Z."/>
            <person name="Bromleigh V."/>
            <person name="Gamble M."/>
            <person name="Naeaer A.M."/>
            <person name="Erdjument-Bromage H."/>
            <person name="Tempst P."/>
            <person name="Freedman L.P."/>
        </authorList>
    </citation>
    <scope>PROTEIN SEQUENCE OF 467-489</scope>
    <scope>IDENTIFICATION IN ARC COMPLEX</scope>
    <source>
        <tissue>Cervix carcinoma</tissue>
    </source>
</reference>
<reference key="9">
    <citation type="journal article" date="1999" name="Mol. Cell">
        <title>A novel human SRB/MED-containing cofactor complex, SMCC, involved in transcription regulation.</title>
        <authorList>
            <person name="Gu W."/>
            <person name="Malik S."/>
            <person name="Ito M."/>
            <person name="Yuan C.-X."/>
            <person name="Fondell J.D."/>
            <person name="Zhang X."/>
            <person name="Martinez E."/>
            <person name="Qin J."/>
            <person name="Roeder R.G."/>
        </authorList>
    </citation>
    <scope>IDENTIFICATION BY MASS SPECTROMETRY</scope>
    <scope>IDENTIFICATION IN THE SMCC COMPLEX</scope>
</reference>
<reference key="10">
    <citation type="journal article" date="1999" name="Mol. Cell">
        <authorList>
            <person name="Gu W."/>
            <person name="Malik S."/>
            <person name="Ito M."/>
            <person name="Yuan C.-X."/>
            <person name="Fondell J.D."/>
            <person name="Zhang X."/>
            <person name="Martinez E."/>
            <person name="Qin J."/>
            <person name="Roeder R.G."/>
        </authorList>
    </citation>
    <scope>ERRATUM OF PUBMED:10024883</scope>
</reference>
<reference key="11">
    <citation type="journal article" date="2002" name="J. Biol. Chem.">
        <title>A coregulatory role for the TRAP-mediator complex in androgen receptor-mediated gene expression.</title>
        <authorList>
            <person name="Wang Q."/>
            <person name="Sharma D."/>
            <person name="Ren Y."/>
            <person name="Fondell J.D."/>
        </authorList>
    </citation>
    <scope>FUNCTION</scope>
    <scope>INTERACTION WITH AR</scope>
</reference>
<reference key="12">
    <citation type="journal article" date="2004" name="Mol. Cell">
        <title>A set of consensus mammalian mediator subunits identified by multidimensional protein identification technology.</title>
        <authorList>
            <person name="Sato S."/>
            <person name="Tomomori-Sato C."/>
            <person name="Parmely T.J."/>
            <person name="Florens L."/>
            <person name="Zybailov B."/>
            <person name="Swanson S.K."/>
            <person name="Banks C.A.S."/>
            <person name="Jin J."/>
            <person name="Cai Y."/>
            <person name="Washburn M.P."/>
            <person name="Conaway J.W."/>
            <person name="Conaway R.C."/>
        </authorList>
    </citation>
    <scope>IDENTIFICATION BY MASS SPECTROMETRY</scope>
    <scope>IDENTIFICATION IN THE MEDIATOR COMPLEX</scope>
</reference>
<reference key="13">
    <citation type="journal article" date="2005" name="Mol. Cell">
        <title>MED1/TRAP220 exists predominantly in a TRAP/Mediator subpopulation enriched in RNA polymerase II and is required for ER-mediated transcription.</title>
        <authorList>
            <person name="Zhang X."/>
            <person name="Krutchinsky A."/>
            <person name="Fukuda A."/>
            <person name="Chen W."/>
            <person name="Yamamura S."/>
            <person name="Chait B.T."/>
            <person name="Roeder R.G."/>
        </authorList>
    </citation>
    <scope>INTERACTION WITH MED1; MED10; MED21 AND MED30</scope>
    <scope>IDENTIFICATION BY MASS SPECTROMETRY</scope>
    <scope>IDENTIFICATION IN THE MEDIATOR COMPLEX</scope>
    <scope>ASSOCIATION OF THE MEDIATOR COMPLEX WITH RNA POLYMERASE II</scope>
</reference>
<reference key="14">
    <citation type="journal article" date="2006" name="J. Biol. Chem.">
        <title>Human Mediator enhances basal transcription by facilitating recruitment of transcription factor IIB during preinitiation complex assembly.</title>
        <authorList>
            <person name="Baek H.J."/>
            <person name="Kang Y.K."/>
            <person name="Roeder R.G."/>
        </authorList>
    </citation>
    <scope>FUNCTION</scope>
    <scope>INTERACTION WITH MED1 AND MED10</scope>
</reference>
<reference key="15">
    <citation type="journal article" date="2008" name="Mol. Cell">
        <title>Kinase-selective enrichment enables quantitative phosphoproteomics of the kinome across the cell cycle.</title>
        <authorList>
            <person name="Daub H."/>
            <person name="Olsen J.V."/>
            <person name="Bairlein M."/>
            <person name="Gnad F."/>
            <person name="Oppermann F.S."/>
            <person name="Korner R."/>
            <person name="Greff Z."/>
            <person name="Keri G."/>
            <person name="Stemmann O."/>
            <person name="Mann M."/>
        </authorList>
    </citation>
    <scope>IDENTIFICATION BY MASS SPECTROMETRY [LARGE SCALE ANALYSIS]</scope>
    <source>
        <tissue>Cervix carcinoma</tissue>
    </source>
</reference>
<reference key="16">
    <citation type="journal article" date="2008" name="Proc. Natl. Acad. Sci. U.S.A.">
        <title>A quantitative atlas of mitotic phosphorylation.</title>
        <authorList>
            <person name="Dephoure N."/>
            <person name="Zhou C."/>
            <person name="Villen J."/>
            <person name="Beausoleil S.A."/>
            <person name="Bakalarski C.E."/>
            <person name="Elledge S.J."/>
            <person name="Gygi S.P."/>
        </authorList>
    </citation>
    <scope>PHOSPHORYLATION [LARGE SCALE ANALYSIS] AT SER-862 AND SER-873</scope>
    <scope>IDENTIFICATION BY MASS SPECTROMETRY [LARGE SCALE ANALYSIS]</scope>
    <source>
        <tissue>Cervix carcinoma</tissue>
    </source>
</reference>
<reference key="17">
    <citation type="journal article" date="2009" name="Anal. Chem.">
        <title>Lys-N and trypsin cover complementary parts of the phosphoproteome in a refined SCX-based approach.</title>
        <authorList>
            <person name="Gauci S."/>
            <person name="Helbig A.O."/>
            <person name="Slijper M."/>
            <person name="Krijgsveld J."/>
            <person name="Heck A.J."/>
            <person name="Mohammed S."/>
        </authorList>
    </citation>
    <scope>IDENTIFICATION BY MASS SPECTROMETRY [LARGE SCALE ANALYSIS]</scope>
</reference>
<reference key="18">
    <citation type="journal article" date="2009" name="Mol. Cell. Proteomics">
        <title>Large-scale proteomics analysis of the human kinome.</title>
        <authorList>
            <person name="Oppermann F.S."/>
            <person name="Gnad F."/>
            <person name="Olsen J.V."/>
            <person name="Hornberger R."/>
            <person name="Greff Z."/>
            <person name="Keri G."/>
            <person name="Mann M."/>
            <person name="Daub H."/>
        </authorList>
    </citation>
    <scope>IDENTIFICATION BY MASS SPECTROMETRY [LARGE SCALE ANALYSIS]</scope>
</reference>
<reference key="19">
    <citation type="journal article" date="2009" name="Sci. Signal.">
        <title>Quantitative phosphoproteomic analysis of T cell receptor signaling reveals system-wide modulation of protein-protein interactions.</title>
        <authorList>
            <person name="Mayya V."/>
            <person name="Lundgren D.H."/>
            <person name="Hwang S.-I."/>
            <person name="Rezaul K."/>
            <person name="Wu L."/>
            <person name="Eng J.K."/>
            <person name="Rodionov V."/>
            <person name="Han D.K."/>
        </authorList>
    </citation>
    <scope>PHOSPHORYLATION [LARGE SCALE ANALYSIS] AT SER-862 AND SER-873</scope>
    <scope>IDENTIFICATION BY MASS SPECTROMETRY [LARGE SCALE ANALYSIS]</scope>
    <source>
        <tissue>Leukemic T-cell</tissue>
    </source>
</reference>
<reference key="20">
    <citation type="journal article" date="2010" name="Sci. Signal.">
        <title>Quantitative phosphoproteomics reveals widespread full phosphorylation site occupancy during mitosis.</title>
        <authorList>
            <person name="Olsen J.V."/>
            <person name="Vermeulen M."/>
            <person name="Santamaria A."/>
            <person name="Kumar C."/>
            <person name="Miller M.L."/>
            <person name="Jensen L.J."/>
            <person name="Gnad F."/>
            <person name="Cox J."/>
            <person name="Jensen T.S."/>
            <person name="Nigg E.A."/>
            <person name="Brunak S."/>
            <person name="Mann M."/>
        </authorList>
    </citation>
    <scope>PHOSPHORYLATION [LARGE SCALE ANALYSIS] AT SER-862 AND SER-873</scope>
    <scope>IDENTIFICATION BY MASS SPECTROMETRY [LARGE SCALE ANALYSIS]</scope>
    <source>
        <tissue>Cervix carcinoma</tissue>
    </source>
</reference>
<reference key="21">
    <citation type="journal article" date="2011" name="Sci. Signal.">
        <title>System-wide temporal characterization of the proteome and phosphoproteome of human embryonic stem cell differentiation.</title>
        <authorList>
            <person name="Rigbolt K.T."/>
            <person name="Prokhorova T.A."/>
            <person name="Akimov V."/>
            <person name="Henningsen J."/>
            <person name="Johansen P.T."/>
            <person name="Kratchmarova I."/>
            <person name="Kassem M."/>
            <person name="Mann M."/>
            <person name="Olsen J.V."/>
            <person name="Blagoev B."/>
        </authorList>
    </citation>
    <scope>PHOSPHORYLATION [LARGE SCALE ANALYSIS] AT SER-862</scope>
    <scope>IDENTIFICATION BY MASS SPECTROMETRY [LARGE SCALE ANALYSIS]</scope>
</reference>
<reference key="22">
    <citation type="journal article" date="2013" name="J. Proteome Res.">
        <title>Toward a comprehensive characterization of a human cancer cell phosphoproteome.</title>
        <authorList>
            <person name="Zhou H."/>
            <person name="Di Palma S."/>
            <person name="Preisinger C."/>
            <person name="Peng M."/>
            <person name="Polat A.N."/>
            <person name="Heck A.J."/>
            <person name="Mohammed S."/>
        </authorList>
    </citation>
    <scope>PHOSPHORYLATION [LARGE SCALE ANALYSIS] AT SER-862 AND SER-873</scope>
    <scope>IDENTIFICATION BY MASS SPECTROMETRY [LARGE SCALE ANALYSIS]</scope>
    <source>
        <tissue>Cervix carcinoma</tissue>
        <tissue>Erythroleukemia</tissue>
    </source>
</reference>
<accession>O75448</accession>
<accession>A8K4S5</accession>
<accession>B3KMR9</accession>
<accession>Q14143</accession>
<accession>Q9NNY5</accession>
<proteinExistence type="evidence at protein level"/>
<name>MED24_HUMAN</name>
<feature type="chain" id="PRO_0000065582" description="Mediator of RNA polymerase II transcription subunit 24">
    <location>
        <begin position="1"/>
        <end position="989"/>
    </location>
</feature>
<feature type="short sequence motif" description="LXXLL motif 1">
    <location>
        <begin position="128"/>
        <end position="132"/>
    </location>
</feature>
<feature type="short sequence motif" description="LXXLL motif 2">
    <location>
        <begin position="344"/>
        <end position="348"/>
    </location>
</feature>
<feature type="short sequence motif" description="LXXLL motif 3">
    <location>
        <begin position="448"/>
        <end position="452"/>
    </location>
</feature>
<feature type="short sequence motif" description="LXXLL motif 4">
    <location>
        <begin position="557"/>
        <end position="561"/>
    </location>
</feature>
<feature type="short sequence motif" description="LXXLL motif 5">
    <location>
        <begin position="788"/>
        <end position="792"/>
    </location>
</feature>
<feature type="short sequence motif" description="LXXLL motif 6">
    <location>
        <begin position="857"/>
        <end position="861"/>
    </location>
</feature>
<feature type="modified residue" description="Phosphoserine" evidence="13 14 15 16 17">
    <location>
        <position position="862"/>
    </location>
</feature>
<feature type="modified residue" description="Phosphoserine" evidence="13 14 15 17">
    <location>
        <position position="873"/>
    </location>
</feature>
<feature type="splice variant" id="VSP_041125" description="In isoform 2." evidence="11">
    <location>
        <begin position="72"/>
        <end position="84"/>
    </location>
</feature>
<feature type="sequence variant" id="VAR_053969" description="In dbSNP:rs34585432." evidence="8">
    <original>A</original>
    <variation>T</variation>
    <location>
        <position position="204"/>
    </location>
</feature>
<feature type="sequence conflict" description="In Ref. 3; BAA09479." evidence="12" ref="3">
    <original>D</original>
    <variation>Y</variation>
    <location>
        <position position="20"/>
    </location>
</feature>
<feature type="sequence conflict" description="In Ref. 8; AA sequence." evidence="12" ref="8">
    <location>
        <position position="476"/>
    </location>
</feature>
<feature type="sequence conflict" description="In Ref. 2; AAF78764." evidence="12" ref="2">
    <original>E</original>
    <variation>G</variation>
    <location>
        <position position="555"/>
    </location>
</feature>
<feature type="sequence conflict" description="In Ref. 4; BAG51081." evidence="12" ref="4">
    <original>V</original>
    <variation>E</variation>
    <location>
        <position position="710"/>
    </location>
</feature>
<feature type="sequence conflict" description="In Ref. 4; BAG51081." evidence="12" ref="4">
    <original>V</original>
    <variation>A</variation>
    <location>
        <position position="741"/>
    </location>
</feature>
<feature type="sequence conflict" description="In Ref. 4; BAG51081." evidence="12" ref="4">
    <original>A</original>
    <variation>P</variation>
    <location>
        <position position="969"/>
    </location>
</feature>
<feature type="helix" evidence="18">
    <location>
        <begin position="6"/>
        <end position="15"/>
    </location>
</feature>
<feature type="helix" evidence="18">
    <location>
        <begin position="20"/>
        <end position="30"/>
    </location>
</feature>
<feature type="helix" evidence="18">
    <location>
        <begin position="35"/>
        <end position="37"/>
    </location>
</feature>
<feature type="turn" evidence="18">
    <location>
        <begin position="38"/>
        <end position="41"/>
    </location>
</feature>
<feature type="helix" evidence="18">
    <location>
        <begin position="42"/>
        <end position="48"/>
    </location>
</feature>
<feature type="strand" evidence="18">
    <location>
        <begin position="51"/>
        <end position="55"/>
    </location>
</feature>
<feature type="helix" evidence="18">
    <location>
        <begin position="58"/>
        <end position="69"/>
    </location>
</feature>
<feature type="helix" evidence="18">
    <location>
        <begin position="75"/>
        <end position="83"/>
    </location>
</feature>
<feature type="helix" evidence="18">
    <location>
        <begin position="91"/>
        <end position="104"/>
    </location>
</feature>
<feature type="turn" evidence="18">
    <location>
        <begin position="105"/>
        <end position="107"/>
    </location>
</feature>
<feature type="helix" evidence="18">
    <location>
        <begin position="114"/>
        <end position="145"/>
    </location>
</feature>
<feature type="helix" evidence="18">
    <location>
        <begin position="157"/>
        <end position="170"/>
    </location>
</feature>
<feature type="helix" evidence="18">
    <location>
        <begin position="172"/>
        <end position="184"/>
    </location>
</feature>
<feature type="helix" evidence="18">
    <location>
        <begin position="188"/>
        <end position="205"/>
    </location>
</feature>
<feature type="helix" evidence="18">
    <location>
        <begin position="211"/>
        <end position="224"/>
    </location>
</feature>
<feature type="helix" evidence="18">
    <location>
        <begin position="242"/>
        <end position="253"/>
    </location>
</feature>
<feature type="helix" evidence="18">
    <location>
        <begin position="260"/>
        <end position="273"/>
    </location>
</feature>
<feature type="helix" evidence="18">
    <location>
        <begin position="278"/>
        <end position="294"/>
    </location>
</feature>
<feature type="helix" evidence="18">
    <location>
        <begin position="300"/>
        <end position="310"/>
    </location>
</feature>
<feature type="helix" evidence="18">
    <location>
        <begin position="312"/>
        <end position="323"/>
    </location>
</feature>
<feature type="helix" evidence="18">
    <location>
        <begin position="330"/>
        <end position="342"/>
    </location>
</feature>
<feature type="helix" evidence="18">
    <location>
        <begin position="345"/>
        <end position="355"/>
    </location>
</feature>
<feature type="helix" evidence="18">
    <location>
        <begin position="359"/>
        <end position="369"/>
    </location>
</feature>
<feature type="helix" evidence="18">
    <location>
        <begin position="375"/>
        <end position="390"/>
    </location>
</feature>
<feature type="helix" evidence="18">
    <location>
        <begin position="406"/>
        <end position="423"/>
    </location>
</feature>
<feature type="turn" evidence="18">
    <location>
        <begin position="424"/>
        <end position="426"/>
    </location>
</feature>
<feature type="helix" evidence="18">
    <location>
        <begin position="427"/>
        <end position="430"/>
    </location>
</feature>
<feature type="helix" evidence="18">
    <location>
        <begin position="432"/>
        <end position="443"/>
    </location>
</feature>
<feature type="helix" evidence="18">
    <location>
        <begin position="447"/>
        <end position="457"/>
    </location>
</feature>
<feature type="helix" evidence="18">
    <location>
        <begin position="461"/>
        <end position="477"/>
    </location>
</feature>
<feature type="helix" evidence="18">
    <location>
        <begin position="483"/>
        <end position="506"/>
    </location>
</feature>
<feature type="turn" evidence="18">
    <location>
        <begin position="510"/>
        <end position="512"/>
    </location>
</feature>
<feature type="strand" evidence="18">
    <location>
        <begin position="518"/>
        <end position="520"/>
    </location>
</feature>
<feature type="helix" evidence="18">
    <location>
        <begin position="524"/>
        <end position="532"/>
    </location>
</feature>
<feature type="helix" evidence="18">
    <location>
        <begin position="545"/>
        <end position="547"/>
    </location>
</feature>
<feature type="helix" evidence="18">
    <location>
        <begin position="552"/>
        <end position="561"/>
    </location>
</feature>
<feature type="helix" evidence="18">
    <location>
        <begin position="574"/>
        <end position="594"/>
    </location>
</feature>
<feature type="helix" evidence="18">
    <location>
        <begin position="599"/>
        <end position="610"/>
    </location>
</feature>
<feature type="helix" evidence="18">
    <location>
        <begin position="615"/>
        <end position="630"/>
    </location>
</feature>
<feature type="helix" evidence="18">
    <location>
        <begin position="637"/>
        <end position="646"/>
    </location>
</feature>
<feature type="strand" evidence="18">
    <location>
        <begin position="647"/>
        <end position="649"/>
    </location>
</feature>
<feature type="helix" evidence="18">
    <location>
        <begin position="659"/>
        <end position="674"/>
    </location>
</feature>
<feature type="helix" evidence="18">
    <location>
        <begin position="677"/>
        <end position="680"/>
    </location>
</feature>
<feature type="strand" evidence="18">
    <location>
        <begin position="696"/>
        <end position="699"/>
    </location>
</feature>
<feature type="strand" evidence="18">
    <location>
        <begin position="703"/>
        <end position="705"/>
    </location>
</feature>
<feature type="helix" evidence="18">
    <location>
        <begin position="707"/>
        <end position="721"/>
    </location>
</feature>
<feature type="helix" evidence="18">
    <location>
        <begin position="726"/>
        <end position="753"/>
    </location>
</feature>
<feature type="helix" evidence="18">
    <location>
        <begin position="758"/>
        <end position="772"/>
    </location>
</feature>
<feature type="helix" evidence="18">
    <location>
        <begin position="776"/>
        <end position="785"/>
    </location>
</feature>
<feature type="helix" evidence="18">
    <location>
        <begin position="787"/>
        <end position="793"/>
    </location>
</feature>
<feature type="helix" evidence="18">
    <location>
        <begin position="797"/>
        <end position="800"/>
    </location>
</feature>
<feature type="helix" evidence="18">
    <location>
        <begin position="803"/>
        <end position="822"/>
    </location>
</feature>
<feature type="helix" evidence="18">
    <location>
        <begin position="830"/>
        <end position="838"/>
    </location>
</feature>
<feature type="helix" evidence="18">
    <location>
        <begin position="843"/>
        <end position="846"/>
    </location>
</feature>
<feature type="helix" evidence="18">
    <location>
        <begin position="896"/>
        <end position="913"/>
    </location>
</feature>
<feature type="helix" evidence="18">
    <location>
        <begin position="919"/>
        <end position="934"/>
    </location>
</feature>
<feature type="helix" evidence="18">
    <location>
        <begin position="943"/>
        <end position="946"/>
    </location>
</feature>
<feature type="helix" evidence="18">
    <location>
        <begin position="950"/>
        <end position="957"/>
    </location>
</feature>
<feature type="helix" evidence="18">
    <location>
        <begin position="966"/>
        <end position="969"/>
    </location>
</feature>
<feature type="turn" evidence="18">
    <location>
        <begin position="970"/>
        <end position="972"/>
    </location>
</feature>
<feature type="helix" evidence="18">
    <location>
        <begin position="976"/>
        <end position="987"/>
    </location>
</feature>
<protein>
    <recommendedName>
        <fullName>Mediator of RNA polymerase II transcription subunit 24</fullName>
    </recommendedName>
    <alternativeName>
        <fullName>Activator-recruited cofactor 100 kDa component</fullName>
        <shortName>ARC100</shortName>
    </alternativeName>
    <alternativeName>
        <fullName>Cofactor required for Sp1 transcriptional activation subunit 4</fullName>
        <shortName>CRSP complex subunit 4</shortName>
    </alternativeName>
    <alternativeName>
        <fullName>Mediator complex subunit 24</fullName>
    </alternativeName>
    <alternativeName>
        <fullName>Thyroid hormone receptor-associated protein 4</fullName>
    </alternativeName>
    <alternativeName>
        <fullName>Thyroid hormone receptor-associated protein complex 100 kDa component</fullName>
        <shortName>Trap100</shortName>
        <shortName>hTRAP100</shortName>
    </alternativeName>
    <alternativeName>
        <fullName>Vitamin D3 receptor-interacting protein complex 100 kDa component</fullName>
        <shortName>DRIP100</shortName>
    </alternativeName>
</protein>
<sequence length="989" mass="110305">MKVVNLKQAILQAWKERWSDYQWAINMKKFFPKGATWDILNLADALLEQAMIGPSPNPLILSYLKYAISSQMVSYSSVLTAISKFDDFSRDLCVQALLDIMDMFCDRLSCHGKAEECIGLCRALLSALHWLLRCTAASAERLREGLEAGTPAAGEKQLAMCLQRLEKTLSSTKNRALLHIAKLEEASSWTAIEHSLLKLGEILANLSNPQLRSQAEQCGTLIRSIPTMLSVHAEQMHKTGFPTVHAVILLEGTMNLTGETQSLVEQLTMVKRMQHIPTPLFVLEIWKACFVGLIESPEGTEELKWTAFTFLKIPQVLVKLKKYSHGDKDFTEDVNCAFEFLLKLTPLLDKADQRCNCDCTNFLLQECGKQGLLSEASVNNLMAKRKADREHAPQQKSGENANIQPNIQLILRAEPTVTNILKTMDADHSKSPEGLLGVLGHMLSGKSLDLLLAAAAATGKLKSFARKFINLNEFTTYGSEESTKPASVRALLFDISFLMLCHVAQTYGSEVILSESRTGAEVPFFETWMQTCMPEEGKILNPDHPCFRPDSTKVESLVALLNNSSEMKLVQMKWHEACLSISAAILEILNAWENGVLAFESIQKITDNIKGKVCSLAVCAVAWLVAHVRMLGLDEREKSLQMIRQLAGPLFSENTLQFYNERVVIMNSILERMCADVLQQTATQIKFPSTGVDTMPYWNLLPPKRPIKEVLTDIFAKVLEKGWVDSRSIHIFDTLLHMGGVYWFCNNLIKELLKETRKEHTLRAVELLYSIFCLDMQQVTLVLLGHILPGLLTDSSKWHSLMDPPGTALAKLAVWCALSSYSSHKGQASTRQKKRHREDIEDYISLFPLDDVQPSKLMRLLSSNEDDANILSSPTDRSMSSSLSASQLHTVNMRDPLNRVLANLFLLISSILGSRTAGPHTQFVQWFMEECVDCLEQGGRGSVLQFMPFTTVSELVKVSAMSSPKVVLAITDLSLPLGRQVAAKAIAAL</sequence>